<organism>
    <name type="scientific">Oryza sativa subsp. japonica</name>
    <name type="common">Rice</name>
    <dbReference type="NCBI Taxonomy" id="39947"/>
    <lineage>
        <taxon>Eukaryota</taxon>
        <taxon>Viridiplantae</taxon>
        <taxon>Streptophyta</taxon>
        <taxon>Embryophyta</taxon>
        <taxon>Tracheophyta</taxon>
        <taxon>Spermatophyta</taxon>
        <taxon>Magnoliopsida</taxon>
        <taxon>Liliopsida</taxon>
        <taxon>Poales</taxon>
        <taxon>Poaceae</taxon>
        <taxon>BOP clade</taxon>
        <taxon>Oryzoideae</taxon>
        <taxon>Oryzeae</taxon>
        <taxon>Oryzinae</taxon>
        <taxon>Oryza</taxon>
        <taxon>Oryza sativa</taxon>
    </lineage>
</organism>
<evidence type="ECO:0000250" key="1"/>
<evidence type="ECO:0000256" key="2">
    <source>
        <dbReference type="SAM" id="MobiDB-lite"/>
    </source>
</evidence>
<evidence type="ECO:0000269" key="3">
    <source>
    </source>
</evidence>
<evidence type="ECO:0000305" key="4"/>
<proteinExistence type="evidence at transcript level"/>
<feature type="chain" id="PRO_0000204629" description="Nuclear transcription factor Y subunit B-4">
    <location>
        <begin position="1"/>
        <end position="143"/>
    </location>
</feature>
<feature type="DNA-binding region" evidence="1">
    <location>
        <begin position="27"/>
        <end position="33"/>
    </location>
</feature>
<feature type="region of interest" description="Disordered" evidence="2">
    <location>
        <begin position="1"/>
        <end position="23"/>
    </location>
</feature>
<feature type="region of interest" description="Subunit association domain (SAD)" evidence="1">
    <location>
        <begin position="54"/>
        <end position="65"/>
    </location>
</feature>
<feature type="region of interest" description="Disordered" evidence="2">
    <location>
        <begin position="117"/>
        <end position="143"/>
    </location>
</feature>
<feature type="compositionally biased region" description="Gly residues" evidence="2">
    <location>
        <begin position="9"/>
        <end position="20"/>
    </location>
</feature>
<feature type="compositionally biased region" description="Basic and acidic residues" evidence="2">
    <location>
        <begin position="117"/>
        <end position="130"/>
    </location>
</feature>
<feature type="sequence conflict" description="In Ref. 2." evidence="4" ref="2">
    <location>
        <begin position="112"/>
        <end position="113"/>
    </location>
</feature>
<protein>
    <recommendedName>
        <fullName>Nuclear transcription factor Y subunit B-4</fullName>
    </recommendedName>
    <alternativeName>
        <fullName>OsNF-YB-4</fullName>
    </alternativeName>
    <alternativeName>
        <fullName>Transcriptional activator HAP3C</fullName>
    </alternativeName>
</protein>
<name>NFYB4_ORYSJ</name>
<keyword id="KW-0010">Activator</keyword>
<keyword id="KW-0238">DNA-binding</keyword>
<keyword id="KW-0539">Nucleus</keyword>
<keyword id="KW-1185">Reference proteome</keyword>
<keyword id="KW-0804">Transcription</keyword>
<keyword id="KW-0805">Transcription regulation</keyword>
<gene>
    <name type="primary">NFYB4</name>
    <name type="synonym">HAP3C</name>
    <name type="ordered locus">Os05g0573500</name>
    <name type="ordered locus">LOC_Os05g49780</name>
    <name type="ORF">OJ1735_C10.17</name>
</gene>
<accession>Q65XK1</accession>
<accession>Q0DFS6</accession>
<accession>Q84NE9</accession>
<comment type="function">
    <text evidence="3">Component of the NF-Y/HAP transcription factor complex. The NF-Y complex stimulates the transcription of various genes by recognizing and binding to a CCAAT motif in promoters. May regulate the expression of photosynthetic genes, and may be involved in chloroplast and amyloplast development.</text>
</comment>
<comment type="subunit">
    <text evidence="1">Heterotrimeric transcription factor composed of three components, NF-YA, NF-YB and NF-YC. NF-YB and NF-YC must interact and dimerize for NF-YA association and DNA binding (By similarity).</text>
</comment>
<comment type="subcellular location">
    <subcellularLocation>
        <location evidence="4">Nucleus</location>
    </subcellularLocation>
</comment>
<comment type="tissue specificity">
    <text evidence="3">Ubiquitous.</text>
</comment>
<comment type="similarity">
    <text evidence="4">Belongs to the NFYB/HAP3 subunit family.</text>
</comment>
<comment type="sequence caution" evidence="4">
    <conflict type="erroneous gene model prediction">
        <sequence resource="EMBL-CDS" id="AAU44106"/>
    </conflict>
</comment>
<dbReference type="EMBL" id="AB095440">
    <property type="protein sequence ID" value="BAC76333.1"/>
    <property type="molecule type" value="mRNA"/>
</dbReference>
<dbReference type="EMBL" id="AC104284">
    <property type="protein sequence ID" value="AAU44106.1"/>
    <property type="status" value="ALT_SEQ"/>
    <property type="molecule type" value="Genomic_DNA"/>
</dbReference>
<dbReference type="EMBL" id="AP008211">
    <property type="protein sequence ID" value="BAF18297.1"/>
    <property type="molecule type" value="Genomic_DNA"/>
</dbReference>
<dbReference type="EMBL" id="AP014961">
    <property type="protein sequence ID" value="BAS95449.1"/>
    <property type="molecule type" value="Genomic_DNA"/>
</dbReference>
<dbReference type="RefSeq" id="XP_015638071.1">
    <property type="nucleotide sequence ID" value="XM_015782585.1"/>
</dbReference>
<dbReference type="SMR" id="Q65XK1"/>
<dbReference type="FunCoup" id="Q65XK1">
    <property type="interactions" value="1103"/>
</dbReference>
<dbReference type="STRING" id="39947.Q65XK1"/>
<dbReference type="PaxDb" id="39947-Q65XK1"/>
<dbReference type="EnsemblPlants" id="Os05t0573500-01">
    <property type="protein sequence ID" value="Os05t0573500-01"/>
    <property type="gene ID" value="Os05g0573500"/>
</dbReference>
<dbReference type="Gramene" id="Os05t0573500-01">
    <property type="protein sequence ID" value="Os05t0573500-01"/>
    <property type="gene ID" value="Os05g0573500"/>
</dbReference>
<dbReference type="KEGG" id="dosa:Os05g0573500"/>
<dbReference type="eggNOG" id="KOG0869">
    <property type="taxonomic scope" value="Eukaryota"/>
</dbReference>
<dbReference type="HOGENOM" id="CLU_066247_13_1_1"/>
<dbReference type="InParanoid" id="Q65XK1"/>
<dbReference type="OMA" id="CDYEIKE"/>
<dbReference type="OrthoDB" id="386949at2759"/>
<dbReference type="Proteomes" id="UP000000763">
    <property type="component" value="Chromosome 5"/>
</dbReference>
<dbReference type="Proteomes" id="UP000059680">
    <property type="component" value="Chromosome 5"/>
</dbReference>
<dbReference type="GO" id="GO:0016602">
    <property type="term" value="C:CCAAT-binding factor complex"/>
    <property type="evidence" value="ECO:0000318"/>
    <property type="project" value="GO_Central"/>
</dbReference>
<dbReference type="GO" id="GO:0001228">
    <property type="term" value="F:DNA-binding transcription activator activity, RNA polymerase II-specific"/>
    <property type="evidence" value="ECO:0007669"/>
    <property type="project" value="InterPro"/>
</dbReference>
<dbReference type="GO" id="GO:0000981">
    <property type="term" value="F:DNA-binding transcription factor activity, RNA polymerase II-specific"/>
    <property type="evidence" value="ECO:0000318"/>
    <property type="project" value="GO_Central"/>
</dbReference>
<dbReference type="GO" id="GO:0046982">
    <property type="term" value="F:protein heterodimerization activity"/>
    <property type="evidence" value="ECO:0007669"/>
    <property type="project" value="InterPro"/>
</dbReference>
<dbReference type="GO" id="GO:0043565">
    <property type="term" value="F:sequence-specific DNA binding"/>
    <property type="evidence" value="ECO:0007669"/>
    <property type="project" value="InterPro"/>
</dbReference>
<dbReference type="GO" id="GO:0006357">
    <property type="term" value="P:regulation of transcription by RNA polymerase II"/>
    <property type="evidence" value="ECO:0000318"/>
    <property type="project" value="GO_Central"/>
</dbReference>
<dbReference type="CDD" id="cd22907">
    <property type="entry name" value="HFD_NFYB"/>
    <property type="match status" value="1"/>
</dbReference>
<dbReference type="FunFam" id="1.10.20.10:FF:000110">
    <property type="entry name" value="Nuclear factor Y, subunit B1"/>
    <property type="match status" value="1"/>
</dbReference>
<dbReference type="Gene3D" id="1.10.20.10">
    <property type="entry name" value="Histone, subunit A"/>
    <property type="match status" value="1"/>
</dbReference>
<dbReference type="InterPro" id="IPR003958">
    <property type="entry name" value="CBFA_NFYB_domain"/>
</dbReference>
<dbReference type="InterPro" id="IPR009072">
    <property type="entry name" value="Histone-fold"/>
</dbReference>
<dbReference type="InterPro" id="IPR027113">
    <property type="entry name" value="Transc_fact_NFYB/HAP3"/>
</dbReference>
<dbReference type="InterPro" id="IPR003956">
    <property type="entry name" value="Transcrpt_fac_NFYB/HAP3_CS"/>
</dbReference>
<dbReference type="PANTHER" id="PTHR11064">
    <property type="entry name" value="CCAAT-BINDING TRANSCRIPTION FACTOR-RELATED"/>
    <property type="match status" value="1"/>
</dbReference>
<dbReference type="PANTHER" id="PTHR11064:SF109">
    <property type="entry name" value="NUCLEAR TRANSCRIPTION FACTOR Y SUBUNIT B-4"/>
    <property type="match status" value="1"/>
</dbReference>
<dbReference type="Pfam" id="PF00808">
    <property type="entry name" value="CBFD_NFYB_HMF"/>
    <property type="match status" value="1"/>
</dbReference>
<dbReference type="PRINTS" id="PR00615">
    <property type="entry name" value="CCAATSUBUNTA"/>
</dbReference>
<dbReference type="SUPFAM" id="SSF47113">
    <property type="entry name" value="Histone-fold"/>
    <property type="match status" value="1"/>
</dbReference>
<dbReference type="PROSITE" id="PS00685">
    <property type="entry name" value="NFYB_HAP3"/>
    <property type="match status" value="1"/>
</dbReference>
<sequence length="143" mass="15530">MSEGFDGTENGGGGGGGGVGKEQDRFLPIANIGRIMRRAVPENGKIAKDSKESVQECVSEFISFITSEASDKCLKEKRKTINGDDLIWSMGTLGFEDYVEPLKLYLRLYRETEGDTKGSRASELPVKKDVVLNGDPGSSFEGM</sequence>
<reference key="1">
    <citation type="journal article" date="2003" name="Plant J.">
        <title>OsHAP3 genes regulate chloroplast biogenesis in rice.</title>
        <authorList>
            <person name="Miyoshi K."/>
            <person name="Ito Y."/>
            <person name="Serizawa A."/>
            <person name="Kurata N."/>
        </authorList>
    </citation>
    <scope>NUCLEOTIDE SEQUENCE [MRNA]</scope>
    <scope>FUNCTION</scope>
    <scope>TISSUE SPECIFICITY</scope>
    <source>
        <strain>cv. Nipponbare</strain>
    </source>
</reference>
<reference key="2">
    <citation type="journal article" date="2005" name="Mol. Genet. Genomics">
        <title>A fine physical map of the rice chromosome 5.</title>
        <authorList>
            <person name="Cheng C.-H."/>
            <person name="Chung M.C."/>
            <person name="Liu S.-M."/>
            <person name="Chen S.-K."/>
            <person name="Kao F.Y."/>
            <person name="Lin S.-J."/>
            <person name="Hsiao S.-H."/>
            <person name="Tseng I.C."/>
            <person name="Hsing Y.-I.C."/>
            <person name="Wu H.-P."/>
            <person name="Chen C.-S."/>
            <person name="Shaw J.-F."/>
            <person name="Wu J."/>
            <person name="Matsumoto T."/>
            <person name="Sasaki T."/>
            <person name="Chen H.-C."/>
            <person name="Chow T.-Y."/>
        </authorList>
    </citation>
    <scope>NUCLEOTIDE SEQUENCE [LARGE SCALE GENOMIC DNA]</scope>
    <source>
        <strain>cv. Nipponbare</strain>
    </source>
</reference>
<reference key="3">
    <citation type="journal article" date="2005" name="Nature">
        <title>The map-based sequence of the rice genome.</title>
        <authorList>
            <consortium name="International rice genome sequencing project (IRGSP)"/>
        </authorList>
    </citation>
    <scope>NUCLEOTIDE SEQUENCE [LARGE SCALE GENOMIC DNA]</scope>
    <source>
        <strain>cv. Nipponbare</strain>
    </source>
</reference>
<reference key="4">
    <citation type="journal article" date="2008" name="Nucleic Acids Res.">
        <title>The rice annotation project database (RAP-DB): 2008 update.</title>
        <authorList>
            <consortium name="The rice annotation project (RAP)"/>
        </authorList>
    </citation>
    <scope>GENOME REANNOTATION</scope>
    <source>
        <strain>cv. Nipponbare</strain>
    </source>
</reference>
<reference key="5">
    <citation type="journal article" date="2013" name="Rice">
        <title>Improvement of the Oryza sativa Nipponbare reference genome using next generation sequence and optical map data.</title>
        <authorList>
            <person name="Kawahara Y."/>
            <person name="de la Bastide M."/>
            <person name="Hamilton J.P."/>
            <person name="Kanamori H."/>
            <person name="McCombie W.R."/>
            <person name="Ouyang S."/>
            <person name="Schwartz D.C."/>
            <person name="Tanaka T."/>
            <person name="Wu J."/>
            <person name="Zhou S."/>
            <person name="Childs K.L."/>
            <person name="Davidson R.M."/>
            <person name="Lin H."/>
            <person name="Quesada-Ocampo L."/>
            <person name="Vaillancourt B."/>
            <person name="Sakai H."/>
            <person name="Lee S.S."/>
            <person name="Kim J."/>
            <person name="Numa H."/>
            <person name="Itoh T."/>
            <person name="Buell C.R."/>
            <person name="Matsumoto T."/>
        </authorList>
    </citation>
    <scope>GENOME REANNOTATION</scope>
    <source>
        <strain>cv. Nipponbare</strain>
    </source>
</reference>